<comment type="function">
    <text evidence="1">This protein is involved in the repair of mismatches in DNA. It is possible that it carries out the mismatch recognition step. This protein has a weak ATPase activity.</text>
</comment>
<comment type="similarity">
    <text evidence="1">Belongs to the DNA mismatch repair MutS family.</text>
</comment>
<organism>
    <name type="scientific">Photobacterium profundum (strain SS9)</name>
    <dbReference type="NCBI Taxonomy" id="298386"/>
    <lineage>
        <taxon>Bacteria</taxon>
        <taxon>Pseudomonadati</taxon>
        <taxon>Pseudomonadota</taxon>
        <taxon>Gammaproteobacteria</taxon>
        <taxon>Vibrionales</taxon>
        <taxon>Vibrionaceae</taxon>
        <taxon>Photobacterium</taxon>
    </lineage>
</organism>
<sequence length="856" mass="95193">MTVKGLETHTPMMQQFLRIKAENPDTLLFYRMGDFYELFFDDAKRASQLLDITLTKRGSSNGQPIPMAGLPYHAVEGYLAKLVQQGVSVAICEQIGDPATSKGPVDRQVVRIVTPGTVSDEALLSERRDNLVAAIYQNSKGFGYATLDITSGRFMLSEPETEEAMQAELQRTSPAELLYPEDFTQMHIIEAIKGTRRRPVWEFDLDTARQQLTMQFGTRDLIGFGVEKTERGLSAAGCLLQYVKDTQRTALPHIRAITLDSKDHSVILDAATRRNLELTQNLSGGFDNTLASVLDHTATPMGSRLLKRWLHQPIRDTKQLNHRLDAIAAFKDTGMFIEVAEVLHHMGDLERILARLALRSARPRDLARMRSALQSLPQLADLLADIEQPRIGELAKYSAPMDELCELLERAIIENPPVIIRDGGVLAPGYNAELDEWRDLADGAKKFLDDLETREREQHGIDSLKVGFNQVHGFFIQISRGQSHLAPDHYVRRQTLKNAERYIIPELKEHEDKVLSSKSKALGLEKKLWEELFDQLLPHLERLQNAASALSELDVLANLAERADTLNYCRPELTDQTGIEIAAGRHPVVEQVLSEPFIANPTSLHHDRRMLIITGPNMGGKSTYMRQTALIALMAHVGSFVPAEAVKIGSLDRIFTRIGASDDLASGRSTFMVEMTETANILHNATSKSLVLMDEIGRGTSTYDGLSLAWASAEWLAEKISAMTLFATHYFELTELPSMMDGLANVHLDAVEHGDEIAFMHAVQEGAASKSYGLAVASLAGVPKAVIKRAKAKLTQLETTGHQQAIKNPSKAPREEQQLTLLPEPSDVEEALAKVNPDEMTPRQALDELYRLKALM</sequence>
<reference key="1">
    <citation type="journal article" date="2005" name="Science">
        <title>Life at depth: Photobacterium profundum genome sequence and expression analysis.</title>
        <authorList>
            <person name="Vezzi A."/>
            <person name="Campanaro S."/>
            <person name="D'Angelo M."/>
            <person name="Simonato F."/>
            <person name="Vitulo N."/>
            <person name="Lauro F.M."/>
            <person name="Cestaro A."/>
            <person name="Malacrida G."/>
            <person name="Simionati B."/>
            <person name="Cannata N."/>
            <person name="Romualdi C."/>
            <person name="Bartlett D.H."/>
            <person name="Valle G."/>
        </authorList>
    </citation>
    <scope>NUCLEOTIDE SEQUENCE [LARGE SCALE GENOMIC DNA]</scope>
    <source>
        <strain>ATCC BAA-1253 / SS9</strain>
    </source>
</reference>
<name>MUTS_PHOPR</name>
<gene>
    <name evidence="1" type="primary">mutS</name>
    <name type="ordered locus">PBPRA3070</name>
</gene>
<keyword id="KW-0067">ATP-binding</keyword>
<keyword id="KW-0227">DNA damage</keyword>
<keyword id="KW-0234">DNA repair</keyword>
<keyword id="KW-0238">DNA-binding</keyword>
<keyword id="KW-0547">Nucleotide-binding</keyword>
<keyword id="KW-1185">Reference proteome</keyword>
<accession>Q6LMU0</accession>
<evidence type="ECO:0000255" key="1">
    <source>
        <dbReference type="HAMAP-Rule" id="MF_00096"/>
    </source>
</evidence>
<evidence type="ECO:0000256" key="2">
    <source>
        <dbReference type="SAM" id="MobiDB-lite"/>
    </source>
</evidence>
<feature type="chain" id="PRO_0000224389" description="DNA mismatch repair protein MutS">
    <location>
        <begin position="1"/>
        <end position="856"/>
    </location>
</feature>
<feature type="region of interest" description="Disordered" evidence="2">
    <location>
        <begin position="798"/>
        <end position="817"/>
    </location>
</feature>
<feature type="compositionally biased region" description="Polar residues" evidence="2">
    <location>
        <begin position="798"/>
        <end position="807"/>
    </location>
</feature>
<feature type="binding site" evidence="1">
    <location>
        <begin position="615"/>
        <end position="622"/>
    </location>
    <ligand>
        <name>ATP</name>
        <dbReference type="ChEBI" id="CHEBI:30616"/>
    </ligand>
</feature>
<proteinExistence type="inferred from homology"/>
<protein>
    <recommendedName>
        <fullName evidence="1">DNA mismatch repair protein MutS</fullName>
    </recommendedName>
</protein>
<dbReference type="EMBL" id="CR378673">
    <property type="protein sequence ID" value="CAG21386.1"/>
    <property type="molecule type" value="Genomic_DNA"/>
</dbReference>
<dbReference type="SMR" id="Q6LMU0"/>
<dbReference type="STRING" id="298386.PBPRA3070"/>
<dbReference type="KEGG" id="ppr:PBPRA3070"/>
<dbReference type="eggNOG" id="COG0249">
    <property type="taxonomic scope" value="Bacteria"/>
</dbReference>
<dbReference type="HOGENOM" id="CLU_002472_4_0_6"/>
<dbReference type="Proteomes" id="UP000000593">
    <property type="component" value="Chromosome 1"/>
</dbReference>
<dbReference type="GO" id="GO:0005829">
    <property type="term" value="C:cytosol"/>
    <property type="evidence" value="ECO:0007669"/>
    <property type="project" value="TreeGrafter"/>
</dbReference>
<dbReference type="GO" id="GO:0005524">
    <property type="term" value="F:ATP binding"/>
    <property type="evidence" value="ECO:0007669"/>
    <property type="project" value="UniProtKB-UniRule"/>
</dbReference>
<dbReference type="GO" id="GO:0140664">
    <property type="term" value="F:ATP-dependent DNA damage sensor activity"/>
    <property type="evidence" value="ECO:0007669"/>
    <property type="project" value="InterPro"/>
</dbReference>
<dbReference type="GO" id="GO:0003684">
    <property type="term" value="F:damaged DNA binding"/>
    <property type="evidence" value="ECO:0007669"/>
    <property type="project" value="UniProtKB-UniRule"/>
</dbReference>
<dbReference type="GO" id="GO:0030983">
    <property type="term" value="F:mismatched DNA binding"/>
    <property type="evidence" value="ECO:0007669"/>
    <property type="project" value="InterPro"/>
</dbReference>
<dbReference type="GO" id="GO:0006298">
    <property type="term" value="P:mismatch repair"/>
    <property type="evidence" value="ECO:0007669"/>
    <property type="project" value="UniProtKB-UniRule"/>
</dbReference>
<dbReference type="CDD" id="cd03284">
    <property type="entry name" value="ABC_MutS1"/>
    <property type="match status" value="1"/>
</dbReference>
<dbReference type="FunFam" id="1.10.1420.10:FF:000002">
    <property type="entry name" value="DNA mismatch repair protein MutS"/>
    <property type="match status" value="1"/>
</dbReference>
<dbReference type="FunFam" id="3.30.420.110:FF:000001">
    <property type="entry name" value="DNA mismatch repair protein MutS"/>
    <property type="match status" value="1"/>
</dbReference>
<dbReference type="FunFam" id="3.40.1170.10:FF:000001">
    <property type="entry name" value="DNA mismatch repair protein MutS"/>
    <property type="match status" value="1"/>
</dbReference>
<dbReference type="FunFam" id="3.40.50.300:FF:000283">
    <property type="entry name" value="DNA mismatch repair protein MutS"/>
    <property type="match status" value="1"/>
</dbReference>
<dbReference type="Gene3D" id="1.10.1420.10">
    <property type="match status" value="2"/>
</dbReference>
<dbReference type="Gene3D" id="6.10.140.430">
    <property type="match status" value="1"/>
</dbReference>
<dbReference type="Gene3D" id="3.40.1170.10">
    <property type="entry name" value="DNA repair protein MutS, domain I"/>
    <property type="match status" value="1"/>
</dbReference>
<dbReference type="Gene3D" id="3.30.420.110">
    <property type="entry name" value="MutS, connector domain"/>
    <property type="match status" value="1"/>
</dbReference>
<dbReference type="Gene3D" id="3.40.50.300">
    <property type="entry name" value="P-loop containing nucleotide triphosphate hydrolases"/>
    <property type="match status" value="1"/>
</dbReference>
<dbReference type="HAMAP" id="MF_00096">
    <property type="entry name" value="MutS"/>
    <property type="match status" value="1"/>
</dbReference>
<dbReference type="InterPro" id="IPR005748">
    <property type="entry name" value="DNA_mismatch_repair_MutS"/>
</dbReference>
<dbReference type="InterPro" id="IPR007695">
    <property type="entry name" value="DNA_mismatch_repair_MutS-lik_N"/>
</dbReference>
<dbReference type="InterPro" id="IPR017261">
    <property type="entry name" value="DNA_mismatch_repair_MutS/MSH"/>
</dbReference>
<dbReference type="InterPro" id="IPR000432">
    <property type="entry name" value="DNA_mismatch_repair_MutS_C"/>
</dbReference>
<dbReference type="InterPro" id="IPR007861">
    <property type="entry name" value="DNA_mismatch_repair_MutS_clamp"/>
</dbReference>
<dbReference type="InterPro" id="IPR007696">
    <property type="entry name" value="DNA_mismatch_repair_MutS_core"/>
</dbReference>
<dbReference type="InterPro" id="IPR016151">
    <property type="entry name" value="DNA_mismatch_repair_MutS_N"/>
</dbReference>
<dbReference type="InterPro" id="IPR036187">
    <property type="entry name" value="DNA_mismatch_repair_MutS_sf"/>
</dbReference>
<dbReference type="InterPro" id="IPR007860">
    <property type="entry name" value="DNA_mmatch_repair_MutS_con_dom"/>
</dbReference>
<dbReference type="InterPro" id="IPR045076">
    <property type="entry name" value="MutS"/>
</dbReference>
<dbReference type="InterPro" id="IPR036678">
    <property type="entry name" value="MutS_con_dom_sf"/>
</dbReference>
<dbReference type="InterPro" id="IPR027417">
    <property type="entry name" value="P-loop_NTPase"/>
</dbReference>
<dbReference type="NCBIfam" id="TIGR01070">
    <property type="entry name" value="mutS1"/>
    <property type="match status" value="1"/>
</dbReference>
<dbReference type="NCBIfam" id="NF003810">
    <property type="entry name" value="PRK05399.1"/>
    <property type="match status" value="1"/>
</dbReference>
<dbReference type="PANTHER" id="PTHR11361:SF34">
    <property type="entry name" value="DNA MISMATCH REPAIR PROTEIN MSH1, MITOCHONDRIAL"/>
    <property type="match status" value="1"/>
</dbReference>
<dbReference type="PANTHER" id="PTHR11361">
    <property type="entry name" value="DNA MISMATCH REPAIR PROTEIN MUTS FAMILY MEMBER"/>
    <property type="match status" value="1"/>
</dbReference>
<dbReference type="Pfam" id="PF01624">
    <property type="entry name" value="MutS_I"/>
    <property type="match status" value="1"/>
</dbReference>
<dbReference type="Pfam" id="PF05188">
    <property type="entry name" value="MutS_II"/>
    <property type="match status" value="1"/>
</dbReference>
<dbReference type="Pfam" id="PF05192">
    <property type="entry name" value="MutS_III"/>
    <property type="match status" value="1"/>
</dbReference>
<dbReference type="Pfam" id="PF05190">
    <property type="entry name" value="MutS_IV"/>
    <property type="match status" value="1"/>
</dbReference>
<dbReference type="Pfam" id="PF00488">
    <property type="entry name" value="MutS_V"/>
    <property type="match status" value="1"/>
</dbReference>
<dbReference type="PIRSF" id="PIRSF037677">
    <property type="entry name" value="DNA_mis_repair_Msh6"/>
    <property type="match status" value="1"/>
</dbReference>
<dbReference type="SMART" id="SM00534">
    <property type="entry name" value="MUTSac"/>
    <property type="match status" value="1"/>
</dbReference>
<dbReference type="SMART" id="SM00533">
    <property type="entry name" value="MUTSd"/>
    <property type="match status" value="1"/>
</dbReference>
<dbReference type="SUPFAM" id="SSF55271">
    <property type="entry name" value="DNA repair protein MutS, domain I"/>
    <property type="match status" value="1"/>
</dbReference>
<dbReference type="SUPFAM" id="SSF53150">
    <property type="entry name" value="DNA repair protein MutS, domain II"/>
    <property type="match status" value="1"/>
</dbReference>
<dbReference type="SUPFAM" id="SSF48334">
    <property type="entry name" value="DNA repair protein MutS, domain III"/>
    <property type="match status" value="1"/>
</dbReference>
<dbReference type="SUPFAM" id="SSF52540">
    <property type="entry name" value="P-loop containing nucleoside triphosphate hydrolases"/>
    <property type="match status" value="1"/>
</dbReference>
<dbReference type="PROSITE" id="PS00486">
    <property type="entry name" value="DNA_MISMATCH_REPAIR_2"/>
    <property type="match status" value="1"/>
</dbReference>